<gene>
    <name evidence="1" type="primary">purA</name>
    <name type="ordered locus">FTT_0204</name>
</gene>
<protein>
    <recommendedName>
        <fullName evidence="1">Adenylosuccinate synthetase</fullName>
        <shortName evidence="1">AMPSase</shortName>
        <shortName evidence="1">AdSS</shortName>
        <ecNumber evidence="1">6.3.4.4</ecNumber>
    </recommendedName>
    <alternativeName>
        <fullName evidence="1">IMP--aspartate ligase</fullName>
    </alternativeName>
</protein>
<proteinExistence type="inferred from homology"/>
<evidence type="ECO:0000255" key="1">
    <source>
        <dbReference type="HAMAP-Rule" id="MF_00011"/>
    </source>
</evidence>
<dbReference type="EC" id="6.3.4.4" evidence="1"/>
<dbReference type="EMBL" id="AJ749949">
    <property type="protein sequence ID" value="CAG44837.1"/>
    <property type="molecule type" value="Genomic_DNA"/>
</dbReference>
<dbReference type="RefSeq" id="WP_003021829.1">
    <property type="nucleotide sequence ID" value="NC_006570.2"/>
</dbReference>
<dbReference type="RefSeq" id="YP_169264.1">
    <property type="nucleotide sequence ID" value="NC_006570.2"/>
</dbReference>
<dbReference type="SMR" id="Q5NI78"/>
<dbReference type="STRING" id="177416.FTT_0204"/>
<dbReference type="DNASU" id="3192003"/>
<dbReference type="EnsemblBacteria" id="CAG44837">
    <property type="protein sequence ID" value="CAG44837"/>
    <property type="gene ID" value="FTT_0204"/>
</dbReference>
<dbReference type="KEGG" id="ftu:FTT_0204"/>
<dbReference type="eggNOG" id="COG0104">
    <property type="taxonomic scope" value="Bacteria"/>
</dbReference>
<dbReference type="OrthoDB" id="9807553at2"/>
<dbReference type="UniPathway" id="UPA00075">
    <property type="reaction ID" value="UER00335"/>
</dbReference>
<dbReference type="Proteomes" id="UP000001174">
    <property type="component" value="Chromosome"/>
</dbReference>
<dbReference type="GO" id="GO:0005737">
    <property type="term" value="C:cytoplasm"/>
    <property type="evidence" value="ECO:0007669"/>
    <property type="project" value="UniProtKB-SubCell"/>
</dbReference>
<dbReference type="GO" id="GO:0004019">
    <property type="term" value="F:adenylosuccinate synthase activity"/>
    <property type="evidence" value="ECO:0007669"/>
    <property type="project" value="UniProtKB-UniRule"/>
</dbReference>
<dbReference type="GO" id="GO:0005525">
    <property type="term" value="F:GTP binding"/>
    <property type="evidence" value="ECO:0007669"/>
    <property type="project" value="UniProtKB-UniRule"/>
</dbReference>
<dbReference type="GO" id="GO:0000287">
    <property type="term" value="F:magnesium ion binding"/>
    <property type="evidence" value="ECO:0007669"/>
    <property type="project" value="UniProtKB-UniRule"/>
</dbReference>
<dbReference type="GO" id="GO:0044208">
    <property type="term" value="P:'de novo' AMP biosynthetic process"/>
    <property type="evidence" value="ECO:0007669"/>
    <property type="project" value="UniProtKB-UniRule"/>
</dbReference>
<dbReference type="GO" id="GO:0046040">
    <property type="term" value="P:IMP metabolic process"/>
    <property type="evidence" value="ECO:0007669"/>
    <property type="project" value="TreeGrafter"/>
</dbReference>
<dbReference type="CDD" id="cd03108">
    <property type="entry name" value="AdSS"/>
    <property type="match status" value="1"/>
</dbReference>
<dbReference type="FunFam" id="1.10.300.10:FF:000001">
    <property type="entry name" value="Adenylosuccinate synthetase"/>
    <property type="match status" value="1"/>
</dbReference>
<dbReference type="FunFam" id="3.90.170.10:FF:000001">
    <property type="entry name" value="Adenylosuccinate synthetase"/>
    <property type="match status" value="1"/>
</dbReference>
<dbReference type="Gene3D" id="3.40.440.10">
    <property type="entry name" value="Adenylosuccinate Synthetase, subunit A, domain 1"/>
    <property type="match status" value="1"/>
</dbReference>
<dbReference type="Gene3D" id="1.10.300.10">
    <property type="entry name" value="Adenylosuccinate Synthetase, subunit A, domain 2"/>
    <property type="match status" value="1"/>
</dbReference>
<dbReference type="Gene3D" id="3.90.170.10">
    <property type="entry name" value="Adenylosuccinate Synthetase, subunit A, domain 3"/>
    <property type="match status" value="1"/>
</dbReference>
<dbReference type="HAMAP" id="MF_00011">
    <property type="entry name" value="Adenylosucc_synth"/>
    <property type="match status" value="1"/>
</dbReference>
<dbReference type="InterPro" id="IPR018220">
    <property type="entry name" value="Adenylosuccin_syn_GTP-bd"/>
</dbReference>
<dbReference type="InterPro" id="IPR033128">
    <property type="entry name" value="Adenylosuccin_syn_Lys_AS"/>
</dbReference>
<dbReference type="InterPro" id="IPR042109">
    <property type="entry name" value="Adenylosuccinate_synth_dom1"/>
</dbReference>
<dbReference type="InterPro" id="IPR042110">
    <property type="entry name" value="Adenylosuccinate_synth_dom2"/>
</dbReference>
<dbReference type="InterPro" id="IPR042111">
    <property type="entry name" value="Adenylosuccinate_synth_dom3"/>
</dbReference>
<dbReference type="InterPro" id="IPR001114">
    <property type="entry name" value="Adenylosuccinate_synthetase"/>
</dbReference>
<dbReference type="InterPro" id="IPR027417">
    <property type="entry name" value="P-loop_NTPase"/>
</dbReference>
<dbReference type="NCBIfam" id="NF002223">
    <property type="entry name" value="PRK01117.1"/>
    <property type="match status" value="1"/>
</dbReference>
<dbReference type="NCBIfam" id="TIGR00184">
    <property type="entry name" value="purA"/>
    <property type="match status" value="1"/>
</dbReference>
<dbReference type="PANTHER" id="PTHR11846">
    <property type="entry name" value="ADENYLOSUCCINATE SYNTHETASE"/>
    <property type="match status" value="1"/>
</dbReference>
<dbReference type="PANTHER" id="PTHR11846:SF0">
    <property type="entry name" value="ADENYLOSUCCINATE SYNTHETASE"/>
    <property type="match status" value="1"/>
</dbReference>
<dbReference type="Pfam" id="PF00709">
    <property type="entry name" value="Adenylsucc_synt"/>
    <property type="match status" value="1"/>
</dbReference>
<dbReference type="SMART" id="SM00788">
    <property type="entry name" value="Adenylsucc_synt"/>
    <property type="match status" value="1"/>
</dbReference>
<dbReference type="SUPFAM" id="SSF52540">
    <property type="entry name" value="P-loop containing nucleoside triphosphate hydrolases"/>
    <property type="match status" value="1"/>
</dbReference>
<dbReference type="PROSITE" id="PS01266">
    <property type="entry name" value="ADENYLOSUCCIN_SYN_1"/>
    <property type="match status" value="1"/>
</dbReference>
<dbReference type="PROSITE" id="PS00513">
    <property type="entry name" value="ADENYLOSUCCIN_SYN_2"/>
    <property type="match status" value="1"/>
</dbReference>
<reference key="1">
    <citation type="journal article" date="2005" name="Nat. Genet.">
        <title>The complete genome sequence of Francisella tularensis, the causative agent of tularemia.</title>
        <authorList>
            <person name="Larsson P."/>
            <person name="Oyston P.C.F."/>
            <person name="Chain P."/>
            <person name="Chu M.C."/>
            <person name="Duffield M."/>
            <person name="Fuxelius H.-H."/>
            <person name="Garcia E."/>
            <person name="Haelltorp G."/>
            <person name="Johansson D."/>
            <person name="Isherwood K.E."/>
            <person name="Karp P.D."/>
            <person name="Larsson E."/>
            <person name="Liu Y."/>
            <person name="Michell S."/>
            <person name="Prior J."/>
            <person name="Prior R."/>
            <person name="Malfatti S."/>
            <person name="Sjoestedt A."/>
            <person name="Svensson K."/>
            <person name="Thompson N."/>
            <person name="Vergez L."/>
            <person name="Wagg J.K."/>
            <person name="Wren B.W."/>
            <person name="Lindler L.E."/>
            <person name="Andersson S.G.E."/>
            <person name="Forsman M."/>
            <person name="Titball R.W."/>
        </authorList>
    </citation>
    <scope>NUCLEOTIDE SEQUENCE [LARGE SCALE GENOMIC DNA]</scope>
    <source>
        <strain>SCHU S4 / Schu 4</strain>
    </source>
</reference>
<accession>Q5NI78</accession>
<name>PURA_FRATT</name>
<comment type="function">
    <text evidence="1">Plays an important role in the de novo pathway of purine nucleotide biosynthesis. Catalyzes the first committed step in the biosynthesis of AMP from IMP.</text>
</comment>
<comment type="catalytic activity">
    <reaction evidence="1">
        <text>IMP + L-aspartate + GTP = N(6)-(1,2-dicarboxyethyl)-AMP + GDP + phosphate + 2 H(+)</text>
        <dbReference type="Rhea" id="RHEA:15753"/>
        <dbReference type="ChEBI" id="CHEBI:15378"/>
        <dbReference type="ChEBI" id="CHEBI:29991"/>
        <dbReference type="ChEBI" id="CHEBI:37565"/>
        <dbReference type="ChEBI" id="CHEBI:43474"/>
        <dbReference type="ChEBI" id="CHEBI:57567"/>
        <dbReference type="ChEBI" id="CHEBI:58053"/>
        <dbReference type="ChEBI" id="CHEBI:58189"/>
        <dbReference type="EC" id="6.3.4.4"/>
    </reaction>
</comment>
<comment type="cofactor">
    <cofactor evidence="1">
        <name>Mg(2+)</name>
        <dbReference type="ChEBI" id="CHEBI:18420"/>
    </cofactor>
    <text evidence="1">Binds 1 Mg(2+) ion per subunit.</text>
</comment>
<comment type="pathway">
    <text evidence="1">Purine metabolism; AMP biosynthesis via de novo pathway; AMP from IMP: step 1/2.</text>
</comment>
<comment type="subunit">
    <text evidence="1">Homodimer.</text>
</comment>
<comment type="subcellular location">
    <subcellularLocation>
        <location evidence="1">Cytoplasm</location>
    </subcellularLocation>
</comment>
<comment type="similarity">
    <text evidence="1">Belongs to the adenylosuccinate synthetase family.</text>
</comment>
<feature type="chain" id="PRO_0000224281" description="Adenylosuccinate synthetase">
    <location>
        <begin position="1"/>
        <end position="428"/>
    </location>
</feature>
<feature type="active site" description="Proton acceptor" evidence="1">
    <location>
        <position position="13"/>
    </location>
</feature>
<feature type="active site" description="Proton donor" evidence="1">
    <location>
        <position position="41"/>
    </location>
</feature>
<feature type="binding site" evidence="1">
    <location>
        <begin position="12"/>
        <end position="18"/>
    </location>
    <ligand>
        <name>GTP</name>
        <dbReference type="ChEBI" id="CHEBI:37565"/>
    </ligand>
</feature>
<feature type="binding site" description="in other chain" evidence="1">
    <location>
        <begin position="13"/>
        <end position="16"/>
    </location>
    <ligand>
        <name>IMP</name>
        <dbReference type="ChEBI" id="CHEBI:58053"/>
        <note>ligand shared between dimeric partners</note>
    </ligand>
</feature>
<feature type="binding site" evidence="1">
    <location>
        <position position="13"/>
    </location>
    <ligand>
        <name>Mg(2+)</name>
        <dbReference type="ChEBI" id="CHEBI:18420"/>
    </ligand>
</feature>
<feature type="binding site" description="in other chain" evidence="1">
    <location>
        <begin position="38"/>
        <end position="41"/>
    </location>
    <ligand>
        <name>IMP</name>
        <dbReference type="ChEBI" id="CHEBI:58053"/>
        <note>ligand shared between dimeric partners</note>
    </ligand>
</feature>
<feature type="binding site" evidence="1">
    <location>
        <begin position="40"/>
        <end position="42"/>
    </location>
    <ligand>
        <name>GTP</name>
        <dbReference type="ChEBI" id="CHEBI:37565"/>
    </ligand>
</feature>
<feature type="binding site" evidence="1">
    <location>
        <position position="40"/>
    </location>
    <ligand>
        <name>Mg(2+)</name>
        <dbReference type="ChEBI" id="CHEBI:18420"/>
    </ligand>
</feature>
<feature type="binding site" description="in other chain" evidence="1">
    <location>
        <position position="129"/>
    </location>
    <ligand>
        <name>IMP</name>
        <dbReference type="ChEBI" id="CHEBI:58053"/>
        <note>ligand shared between dimeric partners</note>
    </ligand>
</feature>
<feature type="binding site" evidence="1">
    <location>
        <position position="143"/>
    </location>
    <ligand>
        <name>IMP</name>
        <dbReference type="ChEBI" id="CHEBI:58053"/>
        <note>ligand shared between dimeric partners</note>
    </ligand>
</feature>
<feature type="binding site" description="in other chain" evidence="1">
    <location>
        <position position="224"/>
    </location>
    <ligand>
        <name>IMP</name>
        <dbReference type="ChEBI" id="CHEBI:58053"/>
        <note>ligand shared between dimeric partners</note>
    </ligand>
</feature>
<feature type="binding site" description="in other chain" evidence="1">
    <location>
        <position position="239"/>
    </location>
    <ligand>
        <name>IMP</name>
        <dbReference type="ChEBI" id="CHEBI:58053"/>
        <note>ligand shared between dimeric partners</note>
    </ligand>
</feature>
<feature type="binding site" evidence="1">
    <location>
        <begin position="299"/>
        <end position="305"/>
    </location>
    <ligand>
        <name>substrate</name>
    </ligand>
</feature>
<feature type="binding site" description="in other chain" evidence="1">
    <location>
        <position position="303"/>
    </location>
    <ligand>
        <name>IMP</name>
        <dbReference type="ChEBI" id="CHEBI:58053"/>
        <note>ligand shared between dimeric partners</note>
    </ligand>
</feature>
<feature type="binding site" evidence="1">
    <location>
        <position position="305"/>
    </location>
    <ligand>
        <name>GTP</name>
        <dbReference type="ChEBI" id="CHEBI:37565"/>
    </ligand>
</feature>
<feature type="binding site" evidence="1">
    <location>
        <begin position="331"/>
        <end position="333"/>
    </location>
    <ligand>
        <name>GTP</name>
        <dbReference type="ChEBI" id="CHEBI:37565"/>
    </ligand>
</feature>
<feature type="binding site" evidence="1">
    <location>
        <begin position="410"/>
        <end position="412"/>
    </location>
    <ligand>
        <name>GTP</name>
        <dbReference type="ChEBI" id="CHEBI:37565"/>
    </ligand>
</feature>
<organism>
    <name type="scientific">Francisella tularensis subsp. tularensis (strain SCHU S4 / Schu 4)</name>
    <dbReference type="NCBI Taxonomy" id="177416"/>
    <lineage>
        <taxon>Bacteria</taxon>
        <taxon>Pseudomonadati</taxon>
        <taxon>Pseudomonadota</taxon>
        <taxon>Gammaproteobacteria</taxon>
        <taxon>Thiotrichales</taxon>
        <taxon>Francisellaceae</taxon>
        <taxon>Francisella</taxon>
    </lineage>
</organism>
<keyword id="KW-0963">Cytoplasm</keyword>
<keyword id="KW-0342">GTP-binding</keyword>
<keyword id="KW-0436">Ligase</keyword>
<keyword id="KW-0460">Magnesium</keyword>
<keyword id="KW-0479">Metal-binding</keyword>
<keyword id="KW-0547">Nucleotide-binding</keyword>
<keyword id="KW-0658">Purine biosynthesis</keyword>
<keyword id="KW-1185">Reference proteome</keyword>
<sequence>MSNIVIVGAQWGDEGKGKIADTLAEKADLVVRYQGGNNAGHTLVVNGKKTFLHLIPSGVLRQHTKCVIGHGVVLDPVALDEEITRLQAKGIAISAENLFVSESCTIITSYHKLLDAVRESNTSEKIGTTGKGIGPAYEDKVSRKGIKFKHLFDKDLLRSRLAISLAEKETLFRDLYKVEYPTLEQEFDKLFALGQKLKQYAADTFSIIDQAIAAGKNVVYEGAQGVLLDVDYGTYPFVTSSNTSVAGVYSGATTAGHGLDHVIGITKAYTTRVGEGPFPTELFDDVGKFIQHKGGEIGVTTGRIRRCGWLDLPLLKYSAKCSNLTSIALTKVDVLSDMDTLKVCIGYKYEGKEIYCAYPGIDLYKVEPILVEMEPFSIDETVTKDNMPAALKTYLKTIENHVGIPISSLAYGPSREQILFFEDYFKKG</sequence>